<keyword id="KW-0002">3D-structure</keyword>
<keyword id="KW-0028">Amino-acid biosynthesis</keyword>
<keyword id="KW-0055">Arginine biosynthesis</keyword>
<keyword id="KW-1017">Isopeptide bond</keyword>
<keyword id="KW-0457">Lysine biosynthesis</keyword>
<keyword id="KW-0479">Metal-binding</keyword>
<keyword id="KW-1185">Reference proteome</keyword>
<keyword id="KW-0862">Zinc</keyword>
<keyword id="KW-0863">Zinc-finger</keyword>
<dbReference type="EMBL" id="BA000023">
    <property type="protein sequence ID" value="BAB65149.1"/>
    <property type="molecule type" value="Genomic_DNA"/>
</dbReference>
<dbReference type="RefSeq" id="WP_010978131.1">
    <property type="nucleotide sequence ID" value="NC_003106.2"/>
</dbReference>
<dbReference type="PDB" id="3VPB">
    <property type="method" value="X-ray"/>
    <property type="resolution" value="1.80 A"/>
    <property type="chains" value="E/F=1-56"/>
</dbReference>
<dbReference type="PDBsum" id="3VPB"/>
<dbReference type="SMR" id="Q976J8"/>
<dbReference type="DIP" id="DIP-61748N"/>
<dbReference type="IntAct" id="Q976J8">
    <property type="interactions" value="1"/>
</dbReference>
<dbReference type="STRING" id="273063.STK_01925"/>
<dbReference type="KEGG" id="sto:STK_01925"/>
<dbReference type="PATRIC" id="fig|273063.9.peg.236"/>
<dbReference type="eggNOG" id="arCOG01588">
    <property type="taxonomic scope" value="Archaea"/>
</dbReference>
<dbReference type="OrthoDB" id="159847at2157"/>
<dbReference type="UniPathway" id="UPA00033"/>
<dbReference type="UniPathway" id="UPA00068"/>
<dbReference type="EvolutionaryTrace" id="Q976J8"/>
<dbReference type="Proteomes" id="UP000001015">
    <property type="component" value="Chromosome"/>
</dbReference>
<dbReference type="GO" id="GO:0008270">
    <property type="term" value="F:zinc ion binding"/>
    <property type="evidence" value="ECO:0007669"/>
    <property type="project" value="UniProtKB-KW"/>
</dbReference>
<dbReference type="GO" id="GO:0006526">
    <property type="term" value="P:L-arginine biosynthetic process"/>
    <property type="evidence" value="ECO:0007669"/>
    <property type="project" value="UniProtKB-UniPathway"/>
</dbReference>
<dbReference type="GO" id="GO:0019878">
    <property type="term" value="P:lysine biosynthetic process via aminoadipic acid"/>
    <property type="evidence" value="ECO:0007669"/>
    <property type="project" value="UniProtKB-UniPathway"/>
</dbReference>
<dbReference type="CDD" id="cd13946">
    <property type="entry name" value="LysW"/>
    <property type="match status" value="1"/>
</dbReference>
<dbReference type="Gene3D" id="2.20.28.160">
    <property type="match status" value="1"/>
</dbReference>
<dbReference type="InterPro" id="IPR005906">
    <property type="entry name" value="LysW"/>
</dbReference>
<dbReference type="NCBIfam" id="NF041070">
    <property type="entry name" value="carrier_LysW_Arch"/>
    <property type="match status" value="1"/>
</dbReference>
<dbReference type="PANTHER" id="PTHR40393:SF2">
    <property type="entry name" value="ALPHA-AMINOADIPATE_GLUTAMATE CARRIER PROTEIN LYSW"/>
    <property type="match status" value="1"/>
</dbReference>
<dbReference type="PANTHER" id="PTHR40393">
    <property type="entry name" value="LYSINE BIOSYNTHESIS PROTEIN-RELATED-RELATED"/>
    <property type="match status" value="1"/>
</dbReference>
<dbReference type="Pfam" id="PF21344">
    <property type="entry name" value="Zn_ribbon_LysW"/>
    <property type="match status" value="1"/>
</dbReference>
<organism>
    <name type="scientific">Sulfurisphaera tokodaii (strain DSM 16993 / JCM 10545 / NBRC 100140 / 7)</name>
    <name type="common">Sulfolobus tokodaii</name>
    <dbReference type="NCBI Taxonomy" id="273063"/>
    <lineage>
        <taxon>Archaea</taxon>
        <taxon>Thermoproteota</taxon>
        <taxon>Thermoprotei</taxon>
        <taxon>Sulfolobales</taxon>
        <taxon>Sulfolobaceae</taxon>
        <taxon>Sulfurisphaera</taxon>
    </lineage>
</organism>
<accession>Q976J8</accession>
<feature type="chain" id="PRO_0000084538" description="Alpha-aminoadipate/glutamate carrier protein LysW">
    <location>
        <begin position="1"/>
        <end position="56"/>
    </location>
</feature>
<feature type="zinc finger region" description="TFIIB-type">
    <location>
        <begin position="1"/>
        <end position="34"/>
    </location>
</feature>
<feature type="short sequence motif" description="EDWGE">
    <location>
        <position position="50"/>
    </location>
</feature>
<feature type="binding site">
    <location>
        <position position="6"/>
    </location>
    <ligand>
        <name>Zn(2+)</name>
        <dbReference type="ChEBI" id="CHEBI:29105"/>
    </ligand>
</feature>
<feature type="binding site">
    <location>
        <position position="9"/>
    </location>
    <ligand>
        <name>Zn(2+)</name>
        <dbReference type="ChEBI" id="CHEBI:29105"/>
    </ligand>
</feature>
<feature type="binding site">
    <location>
        <position position="27"/>
    </location>
    <ligand>
        <name>Zn(2+)</name>
        <dbReference type="ChEBI" id="CHEBI:29105"/>
    </ligand>
</feature>
<feature type="binding site">
    <location>
        <position position="29"/>
    </location>
    <ligand>
        <name>Zn(2+)</name>
        <dbReference type="ChEBI" id="CHEBI:29105"/>
    </ligand>
</feature>
<feature type="modified residue" description="5-glutamyl 2-aminoadipic acid; alternate" evidence="1">
    <location>
        <position position="56"/>
    </location>
</feature>
<feature type="modified residue" description="5-glutamyl glutamate; alternate" evidence="1">
    <location>
        <position position="56"/>
    </location>
</feature>
<feature type="modified residue" description="5-glutamyl N2-lysine; alternate" evidence="2">
    <location>
        <position position="56"/>
    </location>
</feature>
<feature type="modified residue" description="5-glutamyl N2-ornithine; alternate" evidence="2">
    <location>
        <position position="56"/>
    </location>
</feature>
<feature type="strand" evidence="4">
    <location>
        <begin position="2"/>
        <end position="5"/>
    </location>
</feature>
<feature type="turn" evidence="4">
    <location>
        <begin position="7"/>
        <end position="9"/>
    </location>
</feature>
<feature type="strand" evidence="4">
    <location>
        <begin position="12"/>
        <end position="15"/>
    </location>
</feature>
<feature type="strand" evidence="4">
    <location>
        <begin position="24"/>
        <end position="26"/>
    </location>
</feature>
<feature type="strand" evidence="4">
    <location>
        <begin position="32"/>
        <end position="38"/>
    </location>
</feature>
<feature type="strand" evidence="4">
    <location>
        <begin position="41"/>
        <end position="46"/>
    </location>
</feature>
<protein>
    <recommendedName>
        <fullName>Alpha-aminoadipate/glutamate carrier protein LysW</fullName>
    </recommendedName>
    <alternativeName>
        <fullName>AAA carrier protein LysW</fullName>
    </alternativeName>
</protein>
<proteinExistence type="evidence at protein level"/>
<name>LYSW_SULTO</name>
<evidence type="ECO:0000269" key="1">
    <source>
    </source>
</evidence>
<evidence type="ECO:0000305" key="2"/>
<evidence type="ECO:0000305" key="3">
    <source>
    </source>
</evidence>
<evidence type="ECO:0007829" key="4">
    <source>
        <dbReference type="PDB" id="3VPB"/>
    </source>
</evidence>
<gene>
    <name type="primary">lysW</name>
    <name type="ordered locus">STK_01925</name>
    <name type="ORF">STS023</name>
</gene>
<reference key="1">
    <citation type="journal article" date="2001" name="DNA Res.">
        <title>Complete genome sequence of an aerobic thermoacidophilic Crenarchaeon, Sulfolobus tokodaii strain7.</title>
        <authorList>
            <person name="Kawarabayasi Y."/>
            <person name="Hino Y."/>
            <person name="Horikawa H."/>
            <person name="Jin-no K."/>
            <person name="Takahashi M."/>
            <person name="Sekine M."/>
            <person name="Baba S."/>
            <person name="Ankai A."/>
            <person name="Kosugi H."/>
            <person name="Hosoyama A."/>
            <person name="Fukui S."/>
            <person name="Nagai Y."/>
            <person name="Nishijima K."/>
            <person name="Otsuka R."/>
            <person name="Nakazawa H."/>
            <person name="Takamiya M."/>
            <person name="Kato Y."/>
            <person name="Yoshizawa T."/>
            <person name="Tanaka T."/>
            <person name="Kudoh Y."/>
            <person name="Yamazaki J."/>
            <person name="Kushida N."/>
            <person name="Oguchi A."/>
            <person name="Aoki K."/>
            <person name="Masuda S."/>
            <person name="Yanagii M."/>
            <person name="Nishimura M."/>
            <person name="Yamagishi A."/>
            <person name="Oshima T."/>
            <person name="Kikuchi H."/>
        </authorList>
    </citation>
    <scope>NUCLEOTIDE SEQUENCE [LARGE SCALE GENOMIC DNA]</scope>
    <source>
        <strain>DSM 16993 / JCM 10545 / NBRC 100140 / 7</strain>
    </source>
</reference>
<reference key="2">
    <citation type="journal article" date="2013" name="Nat. Chem. Biol.">
        <title>Lysine and arginine biosyntheses mediated by a common carrier protein in Sulfolobus.</title>
        <authorList>
            <person name="Ouchi T."/>
            <person name="Tomita T."/>
            <person name="Horie A."/>
            <person name="Yoshida A."/>
            <person name="Takahashi K."/>
            <person name="Nishida H."/>
            <person name="Lassak K."/>
            <person name="Taka H."/>
            <person name="Mineki R."/>
            <person name="Fujimura T."/>
            <person name="Kosono S."/>
            <person name="Nishiyama C."/>
            <person name="Masui R."/>
            <person name="Kuramitsu S."/>
            <person name="Albers S.V."/>
            <person name="Kuzuyama T."/>
            <person name="Nishiyama M."/>
        </authorList>
    </citation>
    <scope>X-RAY CRYSTALLOGRAPHY (1.8 ANGSTROMS) IN COMPLEXES WITH ZINC AND ARGX</scope>
    <scope>FUNCTION</scope>
    <scope>GLUTAMYLATION AT GLU-56</scope>
    <scope>SUBUNIT</scope>
</reference>
<comment type="function">
    <text evidence="1">Carrier protein that bears the covalently bound substrates for arginine and lysine biosynthesis; bound L-glutamate is sequentially converted to L-ornithine, while bound alpha-aminoadipate (AAA) is sequentially converted to L-lysine.</text>
</comment>
<comment type="pathway">
    <text>Amino-acid biosynthesis; L-lysine biosynthesis via AAA pathway.</text>
</comment>
<comment type="pathway">
    <text>Amino-acid biosynthesis; L-arginine biosynthesis.</text>
</comment>
<comment type="subunit">
    <text evidence="1">Monomer.</text>
</comment>
<comment type="PTM">
    <text evidence="1">Formation of an isopeptide bond between the gamma-carboxyl group of the C-terminal glutamate and the amino group of alpha-aminoadipate (AAA) is catalyzed by LysX. The bound AAA is then converted to L-lysine in a series of reactions catalyzed by LysZ, LysY and LysJ. Release of the product L-lysine is catalyzed by LysK. Formation of an isopeptide bond between the gamma-carboxyl group of the C-terminal glutamate and the amino group of L-glutamate is catalyzed by ArgX. The bound substrate is then sequentially converted to ornithine which is eventually converted to L-arginine (PubMed:23434852).</text>
</comment>
<comment type="miscellaneous">
    <text evidence="3">Binds zinc ions via its zinc finger domain, as shown by X-ray crystallography (PubMed:23434852). In contrast, the absorption spectrum of the ortholog from Thermophilus suggests that it may bind iron ions, possibly via the predicted zinc finger domain.</text>
</comment>
<sequence length="56" mass="6104">MVVLKCPVCNGDVNVPDDALPGEIVEHECGAQLEVYNDHGRLALRLAEQVGEDWGE</sequence>